<gene>
    <name type="ordered locus">YPO1593</name>
    <name type="ordered locus">y1751</name>
    <name type="ordered locus">YP_2261</name>
</gene>
<organism>
    <name type="scientific">Yersinia pestis</name>
    <dbReference type="NCBI Taxonomy" id="632"/>
    <lineage>
        <taxon>Bacteria</taxon>
        <taxon>Pseudomonadati</taxon>
        <taxon>Pseudomonadota</taxon>
        <taxon>Gammaproteobacteria</taxon>
        <taxon>Enterobacterales</taxon>
        <taxon>Yersiniaceae</taxon>
        <taxon>Yersinia</taxon>
    </lineage>
</organism>
<sequence length="198" mass="21573">MPQLVLASTSSYRRALLEKLQLPFITDAPETDETPHAGESTEALVQRLASAKAQALAGRYPQHLIIGSDQVCVIDGKITGKPLQYSTAVKQLQQASGQCVTFYTGLTLLNTANNSINCTCETFDVYFRTLSQAEIDGYLLREQPWNCAGSFKSEGLGITLFERLAGRDPNTLIGLPLIALTQMLIEQGVNPLTVKPVE</sequence>
<feature type="chain" id="PRO_0000123082" description="7-methyl-GTP pyrophosphatase">
    <location>
        <begin position="1"/>
        <end position="198"/>
    </location>
</feature>
<feature type="active site" description="Proton acceptor" evidence="1">
    <location>
        <position position="69"/>
    </location>
</feature>
<feature type="site" description="Important for substrate specificity" evidence="1">
    <location>
        <position position="12"/>
    </location>
</feature>
<feature type="site" description="Important for substrate specificity" evidence="1">
    <location>
        <position position="70"/>
    </location>
</feature>
<feature type="site" description="Important for substrate specificity" evidence="1">
    <location>
        <position position="154"/>
    </location>
</feature>
<accession>P58635</accession>
<accession>Q0WGI4</accession>
<name>NTPPB_YERPE</name>
<protein>
    <recommendedName>
        <fullName evidence="1">7-methyl-GTP pyrophosphatase</fullName>
        <shortName evidence="1">m(7)GTP pyrophosphatase</shortName>
        <ecNumber evidence="1">3.6.1.-</ecNumber>
    </recommendedName>
</protein>
<proteinExistence type="inferred from homology"/>
<evidence type="ECO:0000255" key="1">
    <source>
        <dbReference type="HAMAP-Rule" id="MF_00528"/>
    </source>
</evidence>
<evidence type="ECO:0000305" key="2"/>
<dbReference type="EC" id="3.6.1.-" evidence="1"/>
<dbReference type="EMBL" id="AL590842">
    <property type="protein sequence ID" value="CAL20238.1"/>
    <property type="molecule type" value="Genomic_DNA"/>
</dbReference>
<dbReference type="EMBL" id="AE009952">
    <property type="protein sequence ID" value="AAM85319.1"/>
    <property type="status" value="ALT_INIT"/>
    <property type="molecule type" value="Genomic_DNA"/>
</dbReference>
<dbReference type="EMBL" id="AE017042">
    <property type="protein sequence ID" value="AAS62467.1"/>
    <property type="status" value="ALT_INIT"/>
    <property type="molecule type" value="Genomic_DNA"/>
</dbReference>
<dbReference type="PIR" id="AD0194">
    <property type="entry name" value="AD0194"/>
</dbReference>
<dbReference type="RefSeq" id="WP_002210928.1">
    <property type="nucleotide sequence ID" value="NZ_WUCM01000105.1"/>
</dbReference>
<dbReference type="RefSeq" id="YP_002346604.1">
    <property type="nucleotide sequence ID" value="NC_003143.1"/>
</dbReference>
<dbReference type="SMR" id="P58635"/>
<dbReference type="STRING" id="214092.YPO1593"/>
<dbReference type="PaxDb" id="214092-YPO1593"/>
<dbReference type="EnsemblBacteria" id="AAS62467">
    <property type="protein sequence ID" value="AAS62467"/>
    <property type="gene ID" value="YP_2261"/>
</dbReference>
<dbReference type="KEGG" id="ype:YPO1593"/>
<dbReference type="KEGG" id="ypk:y1751"/>
<dbReference type="KEGG" id="ypm:YP_2261"/>
<dbReference type="PATRIC" id="fig|214092.21.peg.1936"/>
<dbReference type="eggNOG" id="COG0424">
    <property type="taxonomic scope" value="Bacteria"/>
</dbReference>
<dbReference type="HOGENOM" id="CLU_040416_1_0_6"/>
<dbReference type="OrthoDB" id="9813694at2"/>
<dbReference type="Proteomes" id="UP000000815">
    <property type="component" value="Chromosome"/>
</dbReference>
<dbReference type="Proteomes" id="UP000001019">
    <property type="component" value="Chromosome"/>
</dbReference>
<dbReference type="Proteomes" id="UP000002490">
    <property type="component" value="Chromosome"/>
</dbReference>
<dbReference type="GO" id="GO:0005737">
    <property type="term" value="C:cytoplasm"/>
    <property type="evidence" value="ECO:0007669"/>
    <property type="project" value="UniProtKB-SubCell"/>
</dbReference>
<dbReference type="GO" id="GO:0047429">
    <property type="term" value="F:nucleoside triphosphate diphosphatase activity"/>
    <property type="evidence" value="ECO:0000318"/>
    <property type="project" value="GO_Central"/>
</dbReference>
<dbReference type="GO" id="GO:0009117">
    <property type="term" value="P:nucleotide metabolic process"/>
    <property type="evidence" value="ECO:0007669"/>
    <property type="project" value="UniProtKB-KW"/>
</dbReference>
<dbReference type="CDD" id="cd00555">
    <property type="entry name" value="Maf"/>
    <property type="match status" value="1"/>
</dbReference>
<dbReference type="FunFam" id="3.90.950.10:FF:000005">
    <property type="entry name" value="7-methyl-GTP pyrophosphatase"/>
    <property type="match status" value="1"/>
</dbReference>
<dbReference type="Gene3D" id="3.90.950.10">
    <property type="match status" value="1"/>
</dbReference>
<dbReference type="HAMAP" id="MF_00528">
    <property type="entry name" value="Maf"/>
    <property type="match status" value="1"/>
</dbReference>
<dbReference type="InterPro" id="IPR029001">
    <property type="entry name" value="ITPase-like_fam"/>
</dbReference>
<dbReference type="InterPro" id="IPR003697">
    <property type="entry name" value="Maf-like"/>
</dbReference>
<dbReference type="NCBIfam" id="TIGR00172">
    <property type="entry name" value="maf"/>
    <property type="match status" value="1"/>
</dbReference>
<dbReference type="PANTHER" id="PTHR43213:SF10">
    <property type="entry name" value="7-METHYL-GTP PYROPHOSPHATASE"/>
    <property type="match status" value="1"/>
</dbReference>
<dbReference type="PANTHER" id="PTHR43213">
    <property type="entry name" value="BIFUNCTIONAL DTTP/UTP PYROPHOSPHATASE/METHYLTRANSFERASE PROTEIN-RELATED"/>
    <property type="match status" value="1"/>
</dbReference>
<dbReference type="Pfam" id="PF02545">
    <property type="entry name" value="Maf"/>
    <property type="match status" value="1"/>
</dbReference>
<dbReference type="PIRSF" id="PIRSF006305">
    <property type="entry name" value="Maf"/>
    <property type="match status" value="1"/>
</dbReference>
<dbReference type="SUPFAM" id="SSF52972">
    <property type="entry name" value="ITPase-like"/>
    <property type="match status" value="1"/>
</dbReference>
<comment type="function">
    <text evidence="1">Nucleoside triphosphate pyrophosphatase that hydrolyzes 7-methyl-GTP (m(7)GTP). May have a dual role in cell division arrest and in preventing the incorporation of modified nucleotides into cellular nucleic acids.</text>
</comment>
<comment type="catalytic activity">
    <reaction evidence="1">
        <text>N(7)-methyl-GTP + H2O = N(7)-methyl-GMP + diphosphate + H(+)</text>
        <dbReference type="Rhea" id="RHEA:58744"/>
        <dbReference type="ChEBI" id="CHEBI:15377"/>
        <dbReference type="ChEBI" id="CHEBI:15378"/>
        <dbReference type="ChEBI" id="CHEBI:33019"/>
        <dbReference type="ChEBI" id="CHEBI:58285"/>
        <dbReference type="ChEBI" id="CHEBI:87133"/>
    </reaction>
</comment>
<comment type="cofactor">
    <cofactor evidence="1">
        <name>a divalent metal cation</name>
        <dbReference type="ChEBI" id="CHEBI:60240"/>
    </cofactor>
</comment>
<comment type="subcellular location">
    <subcellularLocation>
        <location evidence="1">Cytoplasm</location>
    </subcellularLocation>
</comment>
<comment type="similarity">
    <text evidence="1">Belongs to the Maf family. YceF subfamily.</text>
</comment>
<comment type="sequence caution" evidence="2">
    <conflict type="erroneous initiation">
        <sequence resource="EMBL-CDS" id="AAM85319"/>
    </conflict>
</comment>
<comment type="sequence caution" evidence="2">
    <conflict type="erroneous initiation">
        <sequence resource="EMBL-CDS" id="AAS62467"/>
    </conflict>
</comment>
<keyword id="KW-0963">Cytoplasm</keyword>
<keyword id="KW-0378">Hydrolase</keyword>
<keyword id="KW-0546">Nucleotide metabolism</keyword>
<keyword id="KW-1185">Reference proteome</keyword>
<reference key="1">
    <citation type="journal article" date="2001" name="Nature">
        <title>Genome sequence of Yersinia pestis, the causative agent of plague.</title>
        <authorList>
            <person name="Parkhill J."/>
            <person name="Wren B.W."/>
            <person name="Thomson N.R."/>
            <person name="Titball R.W."/>
            <person name="Holden M.T.G."/>
            <person name="Prentice M.B."/>
            <person name="Sebaihia M."/>
            <person name="James K.D."/>
            <person name="Churcher C.M."/>
            <person name="Mungall K.L."/>
            <person name="Baker S."/>
            <person name="Basham D."/>
            <person name="Bentley S.D."/>
            <person name="Brooks K."/>
            <person name="Cerdeno-Tarraga A.-M."/>
            <person name="Chillingworth T."/>
            <person name="Cronin A."/>
            <person name="Davies R.M."/>
            <person name="Davis P."/>
            <person name="Dougan G."/>
            <person name="Feltwell T."/>
            <person name="Hamlin N."/>
            <person name="Holroyd S."/>
            <person name="Jagels K."/>
            <person name="Karlyshev A.V."/>
            <person name="Leather S."/>
            <person name="Moule S."/>
            <person name="Oyston P.C.F."/>
            <person name="Quail M.A."/>
            <person name="Rutherford K.M."/>
            <person name="Simmonds M."/>
            <person name="Skelton J."/>
            <person name="Stevens K."/>
            <person name="Whitehead S."/>
            <person name="Barrell B.G."/>
        </authorList>
    </citation>
    <scope>NUCLEOTIDE SEQUENCE [LARGE SCALE GENOMIC DNA]</scope>
    <source>
        <strain>CO-92 / Biovar Orientalis</strain>
    </source>
</reference>
<reference key="2">
    <citation type="journal article" date="2002" name="J. Bacteriol.">
        <title>Genome sequence of Yersinia pestis KIM.</title>
        <authorList>
            <person name="Deng W."/>
            <person name="Burland V."/>
            <person name="Plunkett G. III"/>
            <person name="Boutin A."/>
            <person name="Mayhew G.F."/>
            <person name="Liss P."/>
            <person name="Perna N.T."/>
            <person name="Rose D.J."/>
            <person name="Mau B."/>
            <person name="Zhou S."/>
            <person name="Schwartz D.C."/>
            <person name="Fetherston J.D."/>
            <person name="Lindler L.E."/>
            <person name="Brubaker R.R."/>
            <person name="Plano G.V."/>
            <person name="Straley S.C."/>
            <person name="McDonough K.A."/>
            <person name="Nilles M.L."/>
            <person name="Matson J.S."/>
            <person name="Blattner F.R."/>
            <person name="Perry R.D."/>
        </authorList>
    </citation>
    <scope>NUCLEOTIDE SEQUENCE [LARGE SCALE GENOMIC DNA]</scope>
    <source>
        <strain>KIM10+ / Biovar Mediaevalis</strain>
    </source>
</reference>
<reference key="3">
    <citation type="journal article" date="2004" name="DNA Res.">
        <title>Complete genome sequence of Yersinia pestis strain 91001, an isolate avirulent to humans.</title>
        <authorList>
            <person name="Song Y."/>
            <person name="Tong Z."/>
            <person name="Wang J."/>
            <person name="Wang L."/>
            <person name="Guo Z."/>
            <person name="Han Y."/>
            <person name="Zhang J."/>
            <person name="Pei D."/>
            <person name="Zhou D."/>
            <person name="Qin H."/>
            <person name="Pang X."/>
            <person name="Han Y."/>
            <person name="Zhai J."/>
            <person name="Li M."/>
            <person name="Cui B."/>
            <person name="Qi Z."/>
            <person name="Jin L."/>
            <person name="Dai R."/>
            <person name="Chen F."/>
            <person name="Li S."/>
            <person name="Ye C."/>
            <person name="Du Z."/>
            <person name="Lin W."/>
            <person name="Wang J."/>
            <person name="Yu J."/>
            <person name="Yang H."/>
            <person name="Wang J."/>
            <person name="Huang P."/>
            <person name="Yang R."/>
        </authorList>
    </citation>
    <scope>NUCLEOTIDE SEQUENCE [LARGE SCALE GENOMIC DNA]</scope>
    <source>
        <strain>91001 / Biovar Mediaevalis</strain>
    </source>
</reference>